<dbReference type="EMBL" id="CP000660">
    <property type="protein sequence ID" value="ABP50222.1"/>
    <property type="molecule type" value="Genomic_DNA"/>
</dbReference>
<dbReference type="SMR" id="A4WIK5"/>
<dbReference type="KEGG" id="pas:Pars_0631"/>
<dbReference type="HOGENOM" id="CLU_192664_0_0_2"/>
<dbReference type="OrthoDB" id="38142at2157"/>
<dbReference type="Proteomes" id="UP000001567">
    <property type="component" value="Chromosome"/>
</dbReference>
<dbReference type="GO" id="GO:0005694">
    <property type="term" value="C:chromosome"/>
    <property type="evidence" value="ECO:0007669"/>
    <property type="project" value="UniProtKB-SubCell"/>
</dbReference>
<dbReference type="GO" id="GO:0005737">
    <property type="term" value="C:cytoplasm"/>
    <property type="evidence" value="ECO:0007669"/>
    <property type="project" value="UniProtKB-SubCell"/>
</dbReference>
<dbReference type="GO" id="GO:0003690">
    <property type="term" value="F:double-stranded DNA binding"/>
    <property type="evidence" value="ECO:0007669"/>
    <property type="project" value="UniProtKB-UniRule"/>
</dbReference>
<dbReference type="Gene3D" id="2.30.30.610">
    <property type="entry name" value="Chromatin protein Cren7"/>
    <property type="match status" value="1"/>
</dbReference>
<dbReference type="HAMAP" id="MF_01387">
    <property type="entry name" value="Chromatin_Cren7"/>
    <property type="match status" value="1"/>
</dbReference>
<dbReference type="InterPro" id="IPR038647">
    <property type="entry name" value="Cren7_sf"/>
</dbReference>
<dbReference type="InterPro" id="IPR020906">
    <property type="entry name" value="dsDNA-bd_Cren7"/>
</dbReference>
<dbReference type="Pfam" id="PF11520">
    <property type="entry name" value="Cren7"/>
    <property type="match status" value="1"/>
</dbReference>
<proteinExistence type="inferred from homology"/>
<keyword id="KW-0158">Chromosome</keyword>
<keyword id="KW-0963">Cytoplasm</keyword>
<keyword id="KW-0238">DNA-binding</keyword>
<keyword id="KW-0488">Methylation</keyword>
<sequence>MAEEILNREYEVEYGGKRYILRPIKAWVLQPPGKPGVVVALFRLPDGKTVRKVVMKLPP</sequence>
<feature type="chain" id="PRO_0000345172" description="Chromatin protein Cren7">
    <location>
        <begin position="1"/>
        <end position="59"/>
    </location>
</feature>
<protein>
    <recommendedName>
        <fullName evidence="1">Chromatin protein Cren7</fullName>
    </recommendedName>
</protein>
<comment type="function">
    <text evidence="1">A chromatin protein, binds double-stranded DNA without sequence specificity. Constrains negative DNA supercoils.</text>
</comment>
<comment type="subunit">
    <text evidence="1">Monomer.</text>
</comment>
<comment type="subcellular location">
    <subcellularLocation>
        <location evidence="1">Chromosome</location>
    </subcellularLocation>
    <subcellularLocation>
        <location evidence="1">Cytoplasm</location>
    </subcellularLocation>
</comment>
<comment type="PTM">
    <text evidence="1">Methylated at multiple sites, to varying extents.</text>
</comment>
<comment type="similarity">
    <text evidence="1">Belongs to the Cren7 family.</text>
</comment>
<reference key="1">
    <citation type="submission" date="2007-04" db="EMBL/GenBank/DDBJ databases">
        <title>Complete sequence of Pyrobaculum arsenaticum DSM 13514.</title>
        <authorList>
            <consortium name="US DOE Joint Genome Institute"/>
            <person name="Copeland A."/>
            <person name="Lucas S."/>
            <person name="Lapidus A."/>
            <person name="Barry K."/>
            <person name="Glavina del Rio T."/>
            <person name="Dalin E."/>
            <person name="Tice H."/>
            <person name="Pitluck S."/>
            <person name="Chain P."/>
            <person name="Malfatti S."/>
            <person name="Shin M."/>
            <person name="Vergez L."/>
            <person name="Schmutz J."/>
            <person name="Larimer F."/>
            <person name="Land M."/>
            <person name="Hauser L."/>
            <person name="Kyrpides N."/>
            <person name="Mikhailova N."/>
            <person name="Cozen A.E."/>
            <person name="Fitz-Gibbon S.T."/>
            <person name="House C.H."/>
            <person name="Saltikov C."/>
            <person name="Lowe T.M."/>
            <person name="Richardson P."/>
        </authorList>
    </citation>
    <scope>NUCLEOTIDE SEQUENCE [LARGE SCALE GENOMIC DNA]</scope>
    <source>
        <strain>ATCC 700994 / DSM 13514 / JCM 11321 / PZ6</strain>
    </source>
</reference>
<accession>A4WIK5</accession>
<gene>
    <name evidence="1" type="primary">creN7</name>
    <name type="ordered locus">Pars_0631</name>
</gene>
<evidence type="ECO:0000255" key="1">
    <source>
        <dbReference type="HAMAP-Rule" id="MF_01387"/>
    </source>
</evidence>
<organism>
    <name type="scientific">Pyrobaculum arsenaticum (strain DSM 13514 / JCM 11321 / PZ6)</name>
    <dbReference type="NCBI Taxonomy" id="340102"/>
    <lineage>
        <taxon>Archaea</taxon>
        <taxon>Thermoproteota</taxon>
        <taxon>Thermoprotei</taxon>
        <taxon>Thermoproteales</taxon>
        <taxon>Thermoproteaceae</taxon>
        <taxon>Pyrobaculum</taxon>
    </lineage>
</organism>
<name>CREN7_PYRAR</name>